<proteinExistence type="inferred from homology"/>
<dbReference type="EC" id="2.6.1.9"/>
<dbReference type="EMBL" id="BX640431">
    <property type="protein sequence ID" value="CAE38142.1"/>
    <property type="molecule type" value="Genomic_DNA"/>
</dbReference>
<dbReference type="RefSeq" id="WP_003810705.1">
    <property type="nucleotide sequence ID" value="NC_002928.3"/>
</dbReference>
<dbReference type="SMR" id="Q7W6Q1"/>
<dbReference type="GeneID" id="93204637"/>
<dbReference type="KEGG" id="bpa:BPP2850"/>
<dbReference type="HOGENOM" id="CLU_017584_3_0_4"/>
<dbReference type="UniPathway" id="UPA00031">
    <property type="reaction ID" value="UER00012"/>
</dbReference>
<dbReference type="Proteomes" id="UP000001421">
    <property type="component" value="Chromosome"/>
</dbReference>
<dbReference type="GO" id="GO:0004400">
    <property type="term" value="F:histidinol-phosphate transaminase activity"/>
    <property type="evidence" value="ECO:0007669"/>
    <property type="project" value="UniProtKB-UniRule"/>
</dbReference>
<dbReference type="GO" id="GO:0030170">
    <property type="term" value="F:pyridoxal phosphate binding"/>
    <property type="evidence" value="ECO:0007669"/>
    <property type="project" value="InterPro"/>
</dbReference>
<dbReference type="GO" id="GO:0000105">
    <property type="term" value="P:L-histidine biosynthetic process"/>
    <property type="evidence" value="ECO:0007669"/>
    <property type="project" value="UniProtKB-UniRule"/>
</dbReference>
<dbReference type="CDD" id="cd00609">
    <property type="entry name" value="AAT_like"/>
    <property type="match status" value="1"/>
</dbReference>
<dbReference type="Gene3D" id="3.90.1150.10">
    <property type="entry name" value="Aspartate Aminotransferase, domain 1"/>
    <property type="match status" value="1"/>
</dbReference>
<dbReference type="Gene3D" id="3.40.640.10">
    <property type="entry name" value="Type I PLP-dependent aspartate aminotransferase-like (Major domain)"/>
    <property type="match status" value="1"/>
</dbReference>
<dbReference type="HAMAP" id="MF_01023">
    <property type="entry name" value="HisC_aminotrans_2"/>
    <property type="match status" value="1"/>
</dbReference>
<dbReference type="InterPro" id="IPR001917">
    <property type="entry name" value="Aminotrans_II_pyridoxalP_BS"/>
</dbReference>
<dbReference type="InterPro" id="IPR004839">
    <property type="entry name" value="Aminotransferase_I/II_large"/>
</dbReference>
<dbReference type="InterPro" id="IPR005861">
    <property type="entry name" value="HisP_aminotrans"/>
</dbReference>
<dbReference type="InterPro" id="IPR050106">
    <property type="entry name" value="HistidinolP_aminotransfase"/>
</dbReference>
<dbReference type="InterPro" id="IPR015424">
    <property type="entry name" value="PyrdxlP-dep_Trfase"/>
</dbReference>
<dbReference type="InterPro" id="IPR015421">
    <property type="entry name" value="PyrdxlP-dep_Trfase_major"/>
</dbReference>
<dbReference type="InterPro" id="IPR015422">
    <property type="entry name" value="PyrdxlP-dep_Trfase_small"/>
</dbReference>
<dbReference type="NCBIfam" id="TIGR01141">
    <property type="entry name" value="hisC"/>
    <property type="match status" value="1"/>
</dbReference>
<dbReference type="PANTHER" id="PTHR43643:SF3">
    <property type="entry name" value="HISTIDINOL-PHOSPHATE AMINOTRANSFERASE"/>
    <property type="match status" value="1"/>
</dbReference>
<dbReference type="PANTHER" id="PTHR43643">
    <property type="entry name" value="HISTIDINOL-PHOSPHATE AMINOTRANSFERASE 2"/>
    <property type="match status" value="1"/>
</dbReference>
<dbReference type="Pfam" id="PF00155">
    <property type="entry name" value="Aminotran_1_2"/>
    <property type="match status" value="1"/>
</dbReference>
<dbReference type="SUPFAM" id="SSF53383">
    <property type="entry name" value="PLP-dependent transferases"/>
    <property type="match status" value="1"/>
</dbReference>
<dbReference type="PROSITE" id="PS00599">
    <property type="entry name" value="AA_TRANSFER_CLASS_2"/>
    <property type="match status" value="1"/>
</dbReference>
<protein>
    <recommendedName>
        <fullName>Histidinol-phosphate aminotransferase 1</fullName>
        <ecNumber>2.6.1.9</ecNumber>
    </recommendedName>
    <alternativeName>
        <fullName>Imidazole acetol-phosphate transaminase 1</fullName>
    </alternativeName>
</protein>
<comment type="catalytic activity">
    <reaction>
        <text>L-histidinol phosphate + 2-oxoglutarate = 3-(imidazol-4-yl)-2-oxopropyl phosphate + L-glutamate</text>
        <dbReference type="Rhea" id="RHEA:23744"/>
        <dbReference type="ChEBI" id="CHEBI:16810"/>
        <dbReference type="ChEBI" id="CHEBI:29985"/>
        <dbReference type="ChEBI" id="CHEBI:57766"/>
        <dbReference type="ChEBI" id="CHEBI:57980"/>
        <dbReference type="EC" id="2.6.1.9"/>
    </reaction>
</comment>
<comment type="cofactor">
    <cofactor evidence="1">
        <name>pyridoxal 5'-phosphate</name>
        <dbReference type="ChEBI" id="CHEBI:597326"/>
    </cofactor>
</comment>
<comment type="pathway">
    <text>Amino-acid biosynthesis; L-histidine biosynthesis; L-histidine from 5-phospho-alpha-D-ribose 1-diphosphate: step 7/9.</text>
</comment>
<comment type="subunit">
    <text evidence="1">Homodimer.</text>
</comment>
<comment type="similarity">
    <text evidence="2">Belongs to the class-II pyridoxal-phosphate-dependent aminotransferase family. Histidinol-phosphate aminotransferase subfamily.</text>
</comment>
<sequence length="356" mass="38786">MSRYWSPVVGTLSPYVPGEQPKLPDLIKLNTNENPYGPSPKALQAIAAAAGDTLRLYPDPASDDLRGAIAAAVGVQADQVFVGNGSDEVLAHVFMALFRHGRPVRFPDISYSFYPVYCGLYEIPYQVVPLTDDFRIDPADYQPGGQAAGGIIFPNPNAPTGRALARDEVERIVTANPDTVVVVDEAYVDFGAESVAPLVDRHDNLLVVQTLSKSRSLAGLRVGFALGSRALIDGLERVKNSFNSYPIDRLASAGAQAAMQDQAYFDRTRQAVMATRERMSADLRALGFDVLPSAANFVFARHPEHDAAQLAARLRERSILVRHFRQARIDQFLRITVGTDAQCEALIGALKKIFSS</sequence>
<accession>Q7W6Q1</accession>
<reference key="1">
    <citation type="journal article" date="2003" name="Nat. Genet.">
        <title>Comparative analysis of the genome sequences of Bordetella pertussis, Bordetella parapertussis and Bordetella bronchiseptica.</title>
        <authorList>
            <person name="Parkhill J."/>
            <person name="Sebaihia M."/>
            <person name="Preston A."/>
            <person name="Murphy L.D."/>
            <person name="Thomson N.R."/>
            <person name="Harris D.E."/>
            <person name="Holden M.T.G."/>
            <person name="Churcher C.M."/>
            <person name="Bentley S.D."/>
            <person name="Mungall K.L."/>
            <person name="Cerdeno-Tarraga A.-M."/>
            <person name="Temple L."/>
            <person name="James K.D."/>
            <person name="Harris B."/>
            <person name="Quail M.A."/>
            <person name="Achtman M."/>
            <person name="Atkin R."/>
            <person name="Baker S."/>
            <person name="Basham D."/>
            <person name="Bason N."/>
            <person name="Cherevach I."/>
            <person name="Chillingworth T."/>
            <person name="Collins M."/>
            <person name="Cronin A."/>
            <person name="Davis P."/>
            <person name="Doggett J."/>
            <person name="Feltwell T."/>
            <person name="Goble A."/>
            <person name="Hamlin N."/>
            <person name="Hauser H."/>
            <person name="Holroyd S."/>
            <person name="Jagels K."/>
            <person name="Leather S."/>
            <person name="Moule S."/>
            <person name="Norberczak H."/>
            <person name="O'Neil S."/>
            <person name="Ormond D."/>
            <person name="Price C."/>
            <person name="Rabbinowitsch E."/>
            <person name="Rutter S."/>
            <person name="Sanders M."/>
            <person name="Saunders D."/>
            <person name="Seeger K."/>
            <person name="Sharp S."/>
            <person name="Simmonds M."/>
            <person name="Skelton J."/>
            <person name="Squares R."/>
            <person name="Squares S."/>
            <person name="Stevens K."/>
            <person name="Unwin L."/>
            <person name="Whitehead S."/>
            <person name="Barrell B.G."/>
            <person name="Maskell D.J."/>
        </authorList>
    </citation>
    <scope>NUCLEOTIDE SEQUENCE [LARGE SCALE GENOMIC DNA]</scope>
    <source>
        <strain>12822 / ATCC BAA-587 / NCTC 13253</strain>
    </source>
</reference>
<feature type="chain" id="PRO_0000153321" description="Histidinol-phosphate aminotransferase 1">
    <location>
        <begin position="1"/>
        <end position="356"/>
    </location>
</feature>
<feature type="modified residue" description="N6-(pyridoxal phosphate)lysine" evidence="1">
    <location>
        <position position="213"/>
    </location>
</feature>
<organism>
    <name type="scientific">Bordetella parapertussis (strain 12822 / ATCC BAA-587 / NCTC 13253)</name>
    <dbReference type="NCBI Taxonomy" id="257311"/>
    <lineage>
        <taxon>Bacteria</taxon>
        <taxon>Pseudomonadati</taxon>
        <taxon>Pseudomonadota</taxon>
        <taxon>Betaproteobacteria</taxon>
        <taxon>Burkholderiales</taxon>
        <taxon>Alcaligenaceae</taxon>
        <taxon>Bordetella</taxon>
    </lineage>
</organism>
<keyword id="KW-0028">Amino-acid biosynthesis</keyword>
<keyword id="KW-0032">Aminotransferase</keyword>
<keyword id="KW-0368">Histidine biosynthesis</keyword>
<keyword id="KW-0663">Pyridoxal phosphate</keyword>
<keyword id="KW-0808">Transferase</keyword>
<name>HIS81_BORPA</name>
<gene>
    <name type="primary">hisC1</name>
    <name type="synonym">his1</name>
    <name type="ordered locus">BPP2850</name>
</gene>
<evidence type="ECO:0000250" key="1"/>
<evidence type="ECO:0000305" key="2"/>